<organism>
    <name type="scientific">Naja samarensis</name>
    <name type="common">Peters' cobra</name>
    <dbReference type="NCBI Taxonomy" id="8660"/>
    <lineage>
        <taxon>Eukaryota</taxon>
        <taxon>Metazoa</taxon>
        <taxon>Chordata</taxon>
        <taxon>Craniata</taxon>
        <taxon>Vertebrata</taxon>
        <taxon>Euteleostomi</taxon>
        <taxon>Lepidosauria</taxon>
        <taxon>Squamata</taxon>
        <taxon>Bifurcata</taxon>
        <taxon>Unidentata</taxon>
        <taxon>Episquamata</taxon>
        <taxon>Toxicofera</taxon>
        <taxon>Serpentes</taxon>
        <taxon>Colubroidea</taxon>
        <taxon>Elapidae</taxon>
        <taxon>Elapinae</taxon>
        <taxon>Naja</taxon>
    </lineage>
</organism>
<feature type="chain" id="PRO_0000093610" description="Short neurotoxin 1" evidence="2">
    <location>
        <begin position="1"/>
        <end position="61"/>
    </location>
</feature>
<feature type="disulfide bond" evidence="1">
    <location>
        <begin position="3"/>
        <end position="23"/>
    </location>
</feature>
<feature type="disulfide bond" evidence="1">
    <location>
        <begin position="17"/>
        <end position="40"/>
    </location>
</feature>
<feature type="disulfide bond" evidence="1">
    <location>
        <begin position="42"/>
        <end position="53"/>
    </location>
</feature>
<feature type="disulfide bond" evidence="1">
    <location>
        <begin position="54"/>
        <end position="59"/>
    </location>
</feature>
<keyword id="KW-0008">Acetylcholine receptor inhibiting toxin</keyword>
<keyword id="KW-0903">Direct protein sequencing</keyword>
<keyword id="KW-1015">Disulfide bond</keyword>
<keyword id="KW-0872">Ion channel impairing toxin</keyword>
<keyword id="KW-0528">Neurotoxin</keyword>
<keyword id="KW-0629">Postsynaptic neurotoxin</keyword>
<keyword id="KW-0964">Secreted</keyword>
<keyword id="KW-0800">Toxin</keyword>
<protein>
    <recommendedName>
        <fullName>Short neurotoxin 1</fullName>
        <shortName>NTX I</shortName>
    </recommendedName>
</protein>
<name>3S11_NAJSA</name>
<dbReference type="PIR" id="A94448">
    <property type="entry name" value="N1NJ1S"/>
</dbReference>
<dbReference type="SMR" id="P60774"/>
<dbReference type="GO" id="GO:0005576">
    <property type="term" value="C:extracellular region"/>
    <property type="evidence" value="ECO:0007669"/>
    <property type="project" value="UniProtKB-SubCell"/>
</dbReference>
<dbReference type="GO" id="GO:0030550">
    <property type="term" value="F:acetylcholine receptor inhibitor activity"/>
    <property type="evidence" value="ECO:0007669"/>
    <property type="project" value="UniProtKB-KW"/>
</dbReference>
<dbReference type="GO" id="GO:0099106">
    <property type="term" value="F:ion channel regulator activity"/>
    <property type="evidence" value="ECO:0007669"/>
    <property type="project" value="UniProtKB-KW"/>
</dbReference>
<dbReference type="GO" id="GO:0090729">
    <property type="term" value="F:toxin activity"/>
    <property type="evidence" value="ECO:0007669"/>
    <property type="project" value="UniProtKB-KW"/>
</dbReference>
<dbReference type="CDD" id="cd00206">
    <property type="entry name" value="TFP_snake_toxin"/>
    <property type="match status" value="1"/>
</dbReference>
<dbReference type="FunFam" id="2.10.60.10:FF:000024">
    <property type="entry name" value="Cytotoxin 1"/>
    <property type="match status" value="1"/>
</dbReference>
<dbReference type="Gene3D" id="2.10.60.10">
    <property type="entry name" value="CD59"/>
    <property type="match status" value="1"/>
</dbReference>
<dbReference type="InterPro" id="IPR003571">
    <property type="entry name" value="Snake_3FTx"/>
</dbReference>
<dbReference type="InterPro" id="IPR045860">
    <property type="entry name" value="Snake_toxin-like_sf"/>
</dbReference>
<dbReference type="InterPro" id="IPR018354">
    <property type="entry name" value="Snake_toxin_con_site"/>
</dbReference>
<dbReference type="InterPro" id="IPR054131">
    <property type="entry name" value="Toxin_cobra-type"/>
</dbReference>
<dbReference type="Pfam" id="PF21947">
    <property type="entry name" value="Toxin_cobra-type"/>
    <property type="match status" value="1"/>
</dbReference>
<dbReference type="SUPFAM" id="SSF57302">
    <property type="entry name" value="Snake toxin-like"/>
    <property type="match status" value="1"/>
</dbReference>
<dbReference type="PROSITE" id="PS00272">
    <property type="entry name" value="SNAKE_TOXIN"/>
    <property type="match status" value="1"/>
</dbReference>
<comment type="function">
    <text>Binds to muscle nicotinic acetylcholine receptor (nAChR) and inhibit acetylcholine from binding to the receptor, thereby impairing neuromuscular transmission.</text>
</comment>
<comment type="subcellular location">
    <subcellularLocation>
        <location evidence="2">Secreted</location>
    </subcellularLocation>
</comment>
<comment type="tissue specificity">
    <text evidence="3">Expressed by the venom gland.</text>
</comment>
<comment type="similarity">
    <text evidence="3">Belongs to the three-finger toxin family. Short-chain subfamily. Type I alpha-neurotoxin sub-subfamily.</text>
</comment>
<accession>P60774</accession>
<accession>P01428</accession>
<sequence>LECHNQQSSQAPTTKTCSGETNCYKKWWSDHRGTIIERGCGCPKVKPGVKLNCCTTDRCNN</sequence>
<proteinExistence type="evidence at protein level"/>
<evidence type="ECO:0000250" key="1">
    <source>
        <dbReference type="UniProtKB" id="P0C1Z0"/>
    </source>
</evidence>
<evidence type="ECO:0000269" key="2">
    <source ref="1"/>
</evidence>
<evidence type="ECO:0000305" key="3"/>
<reference key="1">
    <citation type="thesis" date="1977" institute="University of Geneva" country="Switzerland">
        <authorList>
            <person name="Hauert J."/>
        </authorList>
    </citation>
    <scope>PROTEIN SEQUENCE</scope>
    <scope>SUBCELLULAR LOCATION</scope>
    <source>
        <tissue>Venom</tissue>
    </source>
</reference>